<name>TRPA_STAA1</name>
<organism>
    <name type="scientific">Staphylococcus aureus (strain Mu3 / ATCC 700698)</name>
    <dbReference type="NCBI Taxonomy" id="418127"/>
    <lineage>
        <taxon>Bacteria</taxon>
        <taxon>Bacillati</taxon>
        <taxon>Bacillota</taxon>
        <taxon>Bacilli</taxon>
        <taxon>Bacillales</taxon>
        <taxon>Staphylococcaceae</taxon>
        <taxon>Staphylococcus</taxon>
    </lineage>
</organism>
<protein>
    <recommendedName>
        <fullName evidence="1">Tryptophan synthase alpha chain</fullName>
        <ecNumber evidence="1">4.2.1.20</ecNumber>
    </recommendedName>
</protein>
<proteinExistence type="inferred from homology"/>
<reference key="1">
    <citation type="journal article" date="2008" name="Antimicrob. Agents Chemother.">
        <title>Mutated response regulator graR is responsible for phenotypic conversion of Staphylococcus aureus from heterogeneous vancomycin-intermediate resistance to vancomycin-intermediate resistance.</title>
        <authorList>
            <person name="Neoh H.-M."/>
            <person name="Cui L."/>
            <person name="Yuzawa H."/>
            <person name="Takeuchi F."/>
            <person name="Matsuo M."/>
            <person name="Hiramatsu K."/>
        </authorList>
    </citation>
    <scope>NUCLEOTIDE SEQUENCE [LARGE SCALE GENOMIC DNA]</scope>
    <source>
        <strain>Mu3 / ATCC 700698</strain>
    </source>
</reference>
<keyword id="KW-0028">Amino-acid biosynthesis</keyword>
<keyword id="KW-0057">Aromatic amino acid biosynthesis</keyword>
<keyword id="KW-0456">Lyase</keyword>
<keyword id="KW-0822">Tryptophan biosynthesis</keyword>
<comment type="function">
    <text evidence="1">The alpha subunit is responsible for the aldol cleavage of indoleglycerol phosphate to indole and glyceraldehyde 3-phosphate.</text>
</comment>
<comment type="catalytic activity">
    <reaction evidence="1">
        <text>(1S,2R)-1-C-(indol-3-yl)glycerol 3-phosphate + L-serine = D-glyceraldehyde 3-phosphate + L-tryptophan + H2O</text>
        <dbReference type="Rhea" id="RHEA:10532"/>
        <dbReference type="ChEBI" id="CHEBI:15377"/>
        <dbReference type="ChEBI" id="CHEBI:33384"/>
        <dbReference type="ChEBI" id="CHEBI:57912"/>
        <dbReference type="ChEBI" id="CHEBI:58866"/>
        <dbReference type="ChEBI" id="CHEBI:59776"/>
        <dbReference type="EC" id="4.2.1.20"/>
    </reaction>
</comment>
<comment type="pathway">
    <text evidence="1">Amino-acid biosynthesis; L-tryptophan biosynthesis; L-tryptophan from chorismate: step 5/5.</text>
</comment>
<comment type="subunit">
    <text evidence="1">Tetramer of two alpha and two beta chains.</text>
</comment>
<comment type="similarity">
    <text evidence="1">Belongs to the TrpA family.</text>
</comment>
<dbReference type="EC" id="4.2.1.20" evidence="1"/>
<dbReference type="EMBL" id="AP009324">
    <property type="protein sequence ID" value="BAF78244.1"/>
    <property type="molecule type" value="Genomic_DNA"/>
</dbReference>
<dbReference type="RefSeq" id="WP_000163628.1">
    <property type="nucleotide sequence ID" value="NC_009782.1"/>
</dbReference>
<dbReference type="SMR" id="A7X240"/>
<dbReference type="KEGG" id="saw:SAHV_1361"/>
<dbReference type="HOGENOM" id="CLU_016734_0_0_9"/>
<dbReference type="UniPathway" id="UPA00035">
    <property type="reaction ID" value="UER00044"/>
</dbReference>
<dbReference type="GO" id="GO:0005829">
    <property type="term" value="C:cytosol"/>
    <property type="evidence" value="ECO:0007669"/>
    <property type="project" value="TreeGrafter"/>
</dbReference>
<dbReference type="GO" id="GO:0004834">
    <property type="term" value="F:tryptophan synthase activity"/>
    <property type="evidence" value="ECO:0007669"/>
    <property type="project" value="UniProtKB-UniRule"/>
</dbReference>
<dbReference type="CDD" id="cd04724">
    <property type="entry name" value="Tryptophan_synthase_alpha"/>
    <property type="match status" value="1"/>
</dbReference>
<dbReference type="Gene3D" id="3.20.20.70">
    <property type="entry name" value="Aldolase class I"/>
    <property type="match status" value="1"/>
</dbReference>
<dbReference type="HAMAP" id="MF_00131">
    <property type="entry name" value="Trp_synth_alpha"/>
    <property type="match status" value="1"/>
</dbReference>
<dbReference type="InterPro" id="IPR013785">
    <property type="entry name" value="Aldolase_TIM"/>
</dbReference>
<dbReference type="InterPro" id="IPR011060">
    <property type="entry name" value="RibuloseP-bd_barrel"/>
</dbReference>
<dbReference type="InterPro" id="IPR018204">
    <property type="entry name" value="Trp_synthase_alpha_AS"/>
</dbReference>
<dbReference type="InterPro" id="IPR002028">
    <property type="entry name" value="Trp_synthase_suA"/>
</dbReference>
<dbReference type="NCBIfam" id="TIGR00262">
    <property type="entry name" value="trpA"/>
    <property type="match status" value="1"/>
</dbReference>
<dbReference type="PANTHER" id="PTHR43406:SF1">
    <property type="entry name" value="TRYPTOPHAN SYNTHASE ALPHA CHAIN, CHLOROPLASTIC"/>
    <property type="match status" value="1"/>
</dbReference>
<dbReference type="PANTHER" id="PTHR43406">
    <property type="entry name" value="TRYPTOPHAN SYNTHASE, ALPHA CHAIN"/>
    <property type="match status" value="1"/>
</dbReference>
<dbReference type="Pfam" id="PF00290">
    <property type="entry name" value="Trp_syntA"/>
    <property type="match status" value="1"/>
</dbReference>
<dbReference type="SUPFAM" id="SSF51366">
    <property type="entry name" value="Ribulose-phoshate binding barrel"/>
    <property type="match status" value="1"/>
</dbReference>
<dbReference type="PROSITE" id="PS00167">
    <property type="entry name" value="TRP_SYNTHASE_ALPHA"/>
    <property type="match status" value="1"/>
</dbReference>
<accession>A7X240</accession>
<evidence type="ECO:0000255" key="1">
    <source>
        <dbReference type="HAMAP-Rule" id="MF_00131"/>
    </source>
</evidence>
<sequence>MTKLFIPYIMGNKDLIENATLLSENGADIIEIGVPFSDPVADGPVIMEAGQQAIKQGITIDYIFNQLEKHGDQIKCNYVLMTYYNIICHYGEQAFFEKCRDTGVYGLIIPDLPYELSQRLKQQFSHYGVKIISLVAMTTDDKRIKDIVSHAEGFIYTVTMNATTGQNGAFHPELKRKIESIKAIANVPVVAGFGIRTPQHVADIKEVADGIVIGSEIVKRFKSNTREEIIRYLQSIQQTLNN</sequence>
<feature type="chain" id="PRO_1000018288" description="Tryptophan synthase alpha chain">
    <location>
        <begin position="1"/>
        <end position="242"/>
    </location>
</feature>
<feature type="active site" description="Proton acceptor" evidence="1">
    <location>
        <position position="31"/>
    </location>
</feature>
<feature type="active site" description="Proton acceptor" evidence="1">
    <location>
        <position position="42"/>
    </location>
</feature>
<gene>
    <name evidence="1" type="primary">trpA</name>
    <name type="ordered locus">SAHV_1361</name>
</gene>